<reference key="1">
    <citation type="journal article" date="2005" name="Nature">
        <title>The genome of the social amoeba Dictyostelium discoideum.</title>
        <authorList>
            <person name="Eichinger L."/>
            <person name="Pachebat J.A."/>
            <person name="Gloeckner G."/>
            <person name="Rajandream M.A."/>
            <person name="Sucgang R."/>
            <person name="Berriman M."/>
            <person name="Song J."/>
            <person name="Olsen R."/>
            <person name="Szafranski K."/>
            <person name="Xu Q."/>
            <person name="Tunggal B."/>
            <person name="Kummerfeld S."/>
            <person name="Madera M."/>
            <person name="Konfortov B.A."/>
            <person name="Rivero F."/>
            <person name="Bankier A.T."/>
            <person name="Lehmann R."/>
            <person name="Hamlin N."/>
            <person name="Davies R."/>
            <person name="Gaudet P."/>
            <person name="Fey P."/>
            <person name="Pilcher K."/>
            <person name="Chen G."/>
            <person name="Saunders D."/>
            <person name="Sodergren E.J."/>
            <person name="Davis P."/>
            <person name="Kerhornou A."/>
            <person name="Nie X."/>
            <person name="Hall N."/>
            <person name="Anjard C."/>
            <person name="Hemphill L."/>
            <person name="Bason N."/>
            <person name="Farbrother P."/>
            <person name="Desany B."/>
            <person name="Just E."/>
            <person name="Morio T."/>
            <person name="Rost R."/>
            <person name="Churcher C.M."/>
            <person name="Cooper J."/>
            <person name="Haydock S."/>
            <person name="van Driessche N."/>
            <person name="Cronin A."/>
            <person name="Goodhead I."/>
            <person name="Muzny D.M."/>
            <person name="Mourier T."/>
            <person name="Pain A."/>
            <person name="Lu M."/>
            <person name="Harper D."/>
            <person name="Lindsay R."/>
            <person name="Hauser H."/>
            <person name="James K.D."/>
            <person name="Quiles M."/>
            <person name="Madan Babu M."/>
            <person name="Saito T."/>
            <person name="Buchrieser C."/>
            <person name="Wardroper A."/>
            <person name="Felder M."/>
            <person name="Thangavelu M."/>
            <person name="Johnson D."/>
            <person name="Knights A."/>
            <person name="Loulseged H."/>
            <person name="Mungall K.L."/>
            <person name="Oliver K."/>
            <person name="Price C."/>
            <person name="Quail M.A."/>
            <person name="Urushihara H."/>
            <person name="Hernandez J."/>
            <person name="Rabbinowitsch E."/>
            <person name="Steffen D."/>
            <person name="Sanders M."/>
            <person name="Ma J."/>
            <person name="Kohara Y."/>
            <person name="Sharp S."/>
            <person name="Simmonds M.N."/>
            <person name="Spiegler S."/>
            <person name="Tivey A."/>
            <person name="Sugano S."/>
            <person name="White B."/>
            <person name="Walker D."/>
            <person name="Woodward J.R."/>
            <person name="Winckler T."/>
            <person name="Tanaka Y."/>
            <person name="Shaulsky G."/>
            <person name="Schleicher M."/>
            <person name="Weinstock G.M."/>
            <person name="Rosenthal A."/>
            <person name="Cox E.C."/>
            <person name="Chisholm R.L."/>
            <person name="Gibbs R.A."/>
            <person name="Loomis W.F."/>
            <person name="Platzer M."/>
            <person name="Kay R.R."/>
            <person name="Williams J.G."/>
            <person name="Dear P.H."/>
            <person name="Noegel A.A."/>
            <person name="Barrell B.G."/>
            <person name="Kuspa A."/>
        </authorList>
    </citation>
    <scope>NUCLEOTIDE SEQUENCE [LARGE SCALE GENOMIC DNA]</scope>
    <source>
        <strain>AX4</strain>
    </source>
</reference>
<protein>
    <recommendedName>
        <fullName>Probable cyclin-dependent serine/threonine-protein kinase DDB_G0292550</fullName>
        <ecNumber>2.7.11.22</ecNumber>
    </recommendedName>
</protein>
<feature type="chain" id="PRO_0000362047" description="Probable cyclin-dependent serine/threonine-protein kinase DDB_G0292550">
    <location>
        <begin position="1"/>
        <end position="1397"/>
    </location>
</feature>
<feature type="domain" description="Protein kinase" evidence="1">
    <location>
        <begin position="4"/>
        <end position="287"/>
    </location>
</feature>
<feature type="region of interest" description="Disordered" evidence="3">
    <location>
        <begin position="412"/>
        <end position="567"/>
    </location>
</feature>
<feature type="region of interest" description="Disordered" evidence="3">
    <location>
        <begin position="671"/>
        <end position="728"/>
    </location>
</feature>
<feature type="region of interest" description="Disordered" evidence="3">
    <location>
        <begin position="763"/>
        <end position="831"/>
    </location>
</feature>
<feature type="region of interest" description="Disordered" evidence="3">
    <location>
        <begin position="845"/>
        <end position="949"/>
    </location>
</feature>
<feature type="region of interest" description="Disordered" evidence="3">
    <location>
        <begin position="996"/>
        <end position="1101"/>
    </location>
</feature>
<feature type="region of interest" description="Disordered" evidence="3">
    <location>
        <begin position="1115"/>
        <end position="1174"/>
    </location>
</feature>
<feature type="region of interest" description="Disordered" evidence="3">
    <location>
        <begin position="1227"/>
        <end position="1324"/>
    </location>
</feature>
<feature type="region of interest" description="Disordered" evidence="3">
    <location>
        <begin position="1340"/>
        <end position="1397"/>
    </location>
</feature>
<feature type="compositionally biased region" description="Low complexity" evidence="3">
    <location>
        <begin position="676"/>
        <end position="715"/>
    </location>
</feature>
<feature type="compositionally biased region" description="Low complexity" evidence="3">
    <location>
        <begin position="845"/>
        <end position="941"/>
    </location>
</feature>
<feature type="compositionally biased region" description="Low complexity" evidence="3">
    <location>
        <begin position="1012"/>
        <end position="1021"/>
    </location>
</feature>
<feature type="compositionally biased region" description="Low complexity" evidence="3">
    <location>
        <begin position="1028"/>
        <end position="1101"/>
    </location>
</feature>
<feature type="compositionally biased region" description="Low complexity" evidence="3">
    <location>
        <begin position="1115"/>
        <end position="1155"/>
    </location>
</feature>
<feature type="compositionally biased region" description="Polar residues" evidence="3">
    <location>
        <begin position="1156"/>
        <end position="1171"/>
    </location>
</feature>
<feature type="compositionally biased region" description="Low complexity" evidence="3">
    <location>
        <begin position="1253"/>
        <end position="1321"/>
    </location>
</feature>
<feature type="compositionally biased region" description="Low complexity" evidence="3">
    <location>
        <begin position="1354"/>
        <end position="1380"/>
    </location>
</feature>
<feature type="active site" description="Proton acceptor" evidence="1 2">
    <location>
        <position position="124"/>
    </location>
</feature>
<feature type="binding site" evidence="1">
    <location>
        <begin position="10"/>
        <end position="18"/>
    </location>
    <ligand>
        <name>ATP</name>
        <dbReference type="ChEBI" id="CHEBI:30616"/>
    </ligand>
</feature>
<feature type="binding site" evidence="1">
    <location>
        <position position="33"/>
    </location>
    <ligand>
        <name>ATP</name>
        <dbReference type="ChEBI" id="CHEBI:30616"/>
    </ligand>
</feature>
<name>Y2550_DICDI</name>
<accession>Q54D75</accession>
<comment type="catalytic activity">
    <reaction>
        <text>L-seryl-[protein] + ATP = O-phospho-L-seryl-[protein] + ADP + H(+)</text>
        <dbReference type="Rhea" id="RHEA:17989"/>
        <dbReference type="Rhea" id="RHEA-COMP:9863"/>
        <dbReference type="Rhea" id="RHEA-COMP:11604"/>
        <dbReference type="ChEBI" id="CHEBI:15378"/>
        <dbReference type="ChEBI" id="CHEBI:29999"/>
        <dbReference type="ChEBI" id="CHEBI:30616"/>
        <dbReference type="ChEBI" id="CHEBI:83421"/>
        <dbReference type="ChEBI" id="CHEBI:456216"/>
        <dbReference type="EC" id="2.7.11.22"/>
    </reaction>
</comment>
<comment type="catalytic activity">
    <reaction>
        <text>L-threonyl-[protein] + ATP = O-phospho-L-threonyl-[protein] + ADP + H(+)</text>
        <dbReference type="Rhea" id="RHEA:46608"/>
        <dbReference type="Rhea" id="RHEA-COMP:11060"/>
        <dbReference type="Rhea" id="RHEA-COMP:11605"/>
        <dbReference type="ChEBI" id="CHEBI:15378"/>
        <dbReference type="ChEBI" id="CHEBI:30013"/>
        <dbReference type="ChEBI" id="CHEBI:30616"/>
        <dbReference type="ChEBI" id="CHEBI:61977"/>
        <dbReference type="ChEBI" id="CHEBI:456216"/>
        <dbReference type="EC" id="2.7.11.22"/>
    </reaction>
</comment>
<comment type="similarity">
    <text evidence="4">Belongs to the protein kinase superfamily. CMGC Ser/Thr protein kinase family. CDC2/CDKX subfamily.</text>
</comment>
<sequence>MNSFQIIELIGSGSYGKVYKAIHNLSKCTVALKIISVMNIENGLPVEVKYLMKLRDCKNIVHLIEYFYSNDDKLVMVFEYLEYDLWKFISPKNKYMTLSCTKFFIHQLLEGLDELHSQKIMHLDIKPSNLLINPRFDLKIADFGFTTYIGNPHLAHQVISLFYRPPELLMGSRNYGPEVDIWSVGCIIVEMLTGFYMFAGSNDSLQLELIFKTFGTPTEKNWPGISKLSGYSPYLGSKSKKYPSKSLKDISKFKSFSNSTLDIILRMLTLCPKNRISTKEALNHPWFFEDPIASPPLDDIINCLVSRPVKISKQHQKTNNCNNNNGSYDIIPPNSILVPKRSSSQQAALQTQQVVDVDLQYLILKAEQQQIQYQKLVLQTSVPNHIYKEVYEVNQLLKQYILRLKQQKVNLNNNNLNNNNNNLYGNNNHNNNNNNNNNNNNNNNNNNYNNNNNNHNNNYNHDNNNNNNYNNNNYKNNNNSNNNFSFNNSNNNNNNNNNNNRNNRNNNNNNNNNNNNNNYNNNSNNNSYNNNFNNGFNNNDNINDDNNNNNSYNNVNNNNINNNNNNNNGFNGFNNYGNNFNNSNNNGNQFGANNNSFNNTDFSNDSNYGSYCNGLMDLINNNSMYNGGNYYMNNASFHQRIQEHIQKIQQQQLQQMEDQQQEKLNFRDYHPLSIPSQHHNTSSSDTHNNNNNNYNNNNNNNNNINNNNINSIHNQSSDHNHFIPNNGFTNENNNNHCINNMNNSNNNNNNNIGNIGSNGGSINEMGNNNNNNNNNNNNNNNNNNNNNNINANHNRNNNNGSNDFSDFNGNQMVINSYNNNSNNNGNINGNNNNGNGNINGIIGNNNNNNSNNNNNTSFNGNRTTTTTTTSSNFNNINNNNNNSNNNNKNNNNKNNNNNNNNNNNNNNNNNNNNNNNNSNNNSINNNTNNNNNNNNNNNGNGLTSSYANHFQYNHPPFNISNAPHPIPFLNNQSIPNSNYQFLNRFSFSNYSNNNSNGLANNYQNPFGHGATNSNNNNSGNNDHVFGHNTFNFNQNNNNNNNNNNNNNNNNNNNNNNNSNNNSNNNNYNSNNNDNSNSNSNNNNNNNNNNNNSLFNNFNTHNNSINRGNNSFDSFNNGFNHLKNNNNNINNNNNDINNNNNNNNNNNNNNGITKNNTQFGPNILSSTQTSHNSPVSLTPISVSSSSFSNYSPTSFSSSSMESLSSSSEFLSSESLSFTNSNQFSPLLNSASQDINNNSRSSRHRSKLNIDTKGNNNNNNNNKNNNNNNNNNNNNNNNNNNNNNNSNNINNDNNNNSNNNSNSNNNNSNSNNNNNSNNNNNNSFGLKRYVDDNEEQLLANQKKKKNIKSSPLPSASSSQQSQTQQQHQIQQQSQTQQQSQTQKIENNDGLSVENPIVLD</sequence>
<proteinExistence type="inferred from homology"/>
<organism>
    <name type="scientific">Dictyostelium discoideum</name>
    <name type="common">Social amoeba</name>
    <dbReference type="NCBI Taxonomy" id="44689"/>
    <lineage>
        <taxon>Eukaryota</taxon>
        <taxon>Amoebozoa</taxon>
        <taxon>Evosea</taxon>
        <taxon>Eumycetozoa</taxon>
        <taxon>Dictyostelia</taxon>
        <taxon>Dictyosteliales</taxon>
        <taxon>Dictyosteliaceae</taxon>
        <taxon>Dictyostelium</taxon>
    </lineage>
</organism>
<gene>
    <name type="ORF">DDB_G0292550</name>
</gene>
<dbReference type="EC" id="2.7.11.22"/>
<dbReference type="EMBL" id="AAFI02000190">
    <property type="protein sequence ID" value="EAL61254.1"/>
    <property type="molecule type" value="Genomic_DNA"/>
</dbReference>
<dbReference type="RefSeq" id="XP_629621.1">
    <property type="nucleotide sequence ID" value="XM_629619.1"/>
</dbReference>
<dbReference type="SMR" id="Q54D75"/>
<dbReference type="STRING" id="44689.Q54D75"/>
<dbReference type="PaxDb" id="44689-DDB0229424"/>
<dbReference type="EnsemblProtists" id="EAL61254">
    <property type="protein sequence ID" value="EAL61254"/>
    <property type="gene ID" value="DDB_G0292550"/>
</dbReference>
<dbReference type="GeneID" id="8628684"/>
<dbReference type="KEGG" id="ddi:DDB_G0292550"/>
<dbReference type="dictyBase" id="DDB_G0292550"/>
<dbReference type="VEuPathDB" id="AmoebaDB:DDB_G0292550"/>
<dbReference type="eggNOG" id="KOG0600">
    <property type="taxonomic scope" value="Eukaryota"/>
</dbReference>
<dbReference type="HOGENOM" id="CLU_254571_0_0_1"/>
<dbReference type="InParanoid" id="Q54D75"/>
<dbReference type="OMA" id="NEIKWIC"/>
<dbReference type="PRO" id="PR:Q54D75"/>
<dbReference type="Proteomes" id="UP000002195">
    <property type="component" value="Chromosome 6"/>
</dbReference>
<dbReference type="GO" id="GO:0005737">
    <property type="term" value="C:cytoplasm"/>
    <property type="evidence" value="ECO:0000318"/>
    <property type="project" value="GO_Central"/>
</dbReference>
<dbReference type="GO" id="GO:0005634">
    <property type="term" value="C:nucleus"/>
    <property type="evidence" value="ECO:0000318"/>
    <property type="project" value="GO_Central"/>
</dbReference>
<dbReference type="GO" id="GO:0005524">
    <property type="term" value="F:ATP binding"/>
    <property type="evidence" value="ECO:0007669"/>
    <property type="project" value="UniProtKB-KW"/>
</dbReference>
<dbReference type="GO" id="GO:0004693">
    <property type="term" value="F:cyclin-dependent protein serine/threonine kinase activity"/>
    <property type="evidence" value="ECO:0000318"/>
    <property type="project" value="GO_Central"/>
</dbReference>
<dbReference type="GO" id="GO:0106310">
    <property type="term" value="F:protein serine kinase activity"/>
    <property type="evidence" value="ECO:0007669"/>
    <property type="project" value="RHEA"/>
</dbReference>
<dbReference type="GO" id="GO:1901987">
    <property type="term" value="P:regulation of cell cycle phase transition"/>
    <property type="evidence" value="ECO:0000318"/>
    <property type="project" value="GO_Central"/>
</dbReference>
<dbReference type="FunFam" id="1.10.510.10:FF:001022">
    <property type="entry name" value="Cyclin-dependent kinase C-1, putative"/>
    <property type="match status" value="1"/>
</dbReference>
<dbReference type="Gene3D" id="3.30.200.20">
    <property type="entry name" value="Phosphorylase Kinase, domain 1"/>
    <property type="match status" value="1"/>
</dbReference>
<dbReference type="Gene3D" id="1.10.510.10">
    <property type="entry name" value="Transferase(Phosphotransferase) domain 1"/>
    <property type="match status" value="1"/>
</dbReference>
<dbReference type="InterPro" id="IPR050108">
    <property type="entry name" value="CDK"/>
</dbReference>
<dbReference type="InterPro" id="IPR011009">
    <property type="entry name" value="Kinase-like_dom_sf"/>
</dbReference>
<dbReference type="InterPro" id="IPR000719">
    <property type="entry name" value="Prot_kinase_dom"/>
</dbReference>
<dbReference type="InterPro" id="IPR017441">
    <property type="entry name" value="Protein_kinase_ATP_BS"/>
</dbReference>
<dbReference type="InterPro" id="IPR008271">
    <property type="entry name" value="Ser/Thr_kinase_AS"/>
</dbReference>
<dbReference type="PANTHER" id="PTHR24056">
    <property type="entry name" value="CELL DIVISION PROTEIN KINASE"/>
    <property type="match status" value="1"/>
</dbReference>
<dbReference type="PANTHER" id="PTHR24056:SF246">
    <property type="entry name" value="ECDYSONE-INDUCED PROTEIN 63E, ISOFORM N"/>
    <property type="match status" value="1"/>
</dbReference>
<dbReference type="Pfam" id="PF00069">
    <property type="entry name" value="Pkinase"/>
    <property type="match status" value="1"/>
</dbReference>
<dbReference type="SMART" id="SM00220">
    <property type="entry name" value="S_TKc"/>
    <property type="match status" value="1"/>
</dbReference>
<dbReference type="SUPFAM" id="SSF56112">
    <property type="entry name" value="Protein kinase-like (PK-like)"/>
    <property type="match status" value="1"/>
</dbReference>
<dbReference type="PROSITE" id="PS00107">
    <property type="entry name" value="PROTEIN_KINASE_ATP"/>
    <property type="match status" value="1"/>
</dbReference>
<dbReference type="PROSITE" id="PS50011">
    <property type="entry name" value="PROTEIN_KINASE_DOM"/>
    <property type="match status" value="1"/>
</dbReference>
<dbReference type="PROSITE" id="PS00108">
    <property type="entry name" value="PROTEIN_KINASE_ST"/>
    <property type="match status" value="1"/>
</dbReference>
<keyword id="KW-0067">ATP-binding</keyword>
<keyword id="KW-0418">Kinase</keyword>
<keyword id="KW-0547">Nucleotide-binding</keyword>
<keyword id="KW-1185">Reference proteome</keyword>
<keyword id="KW-0723">Serine/threonine-protein kinase</keyword>
<keyword id="KW-0808">Transferase</keyword>
<evidence type="ECO:0000255" key="1">
    <source>
        <dbReference type="PROSITE-ProRule" id="PRU00159"/>
    </source>
</evidence>
<evidence type="ECO:0000255" key="2">
    <source>
        <dbReference type="PROSITE-ProRule" id="PRU10027"/>
    </source>
</evidence>
<evidence type="ECO:0000256" key="3">
    <source>
        <dbReference type="SAM" id="MobiDB-lite"/>
    </source>
</evidence>
<evidence type="ECO:0000305" key="4"/>